<sequence>MANYFNTLNLRQQLAQLGKCRFMARDEFADEAGYLKGKKVVIVGCGAQGLNQGLNMRDSGLDVAYALRKEAIAEKRASWRKATENGFKVGTYEELIPQADLVVNLTPDKQHSAVVKAVQPLMKEGAALGYSHGFNIVEVGEQVRKDITVVMVAPKCPGTEVREEYKRGFGVPTLIAVHPENDPKGEGMAIAKAWAAATGGHRAGVLEFSFVAEVKSDLMGEQTILCGMLQAGSLLCFDKLVSEGTDAAYAEKLIQFGWETITEALKQGGITLMMDRLSNPAKLRAYALSEQLKEIMAPLFQKHMDDIISGAFSSGMMADWANDDVKLLNWREETGRTAFENAPQFEGKISEQEYFDHGVLMIAMVKAGVELAFETMVDSGIIEESAYYESLHELPLIANTIARKRLYEMNVVISDTAEYGNYLFANAAVPLLKEKFMDSLQAGDLGKSIPGSAVDNAQLRDVNEAIRNHPIEAVGHKLRGYMTDMKRIAVAG</sequence>
<comment type="function">
    <text evidence="1">Involved in the biosynthesis of branched-chain amino acids (BCAA). Catalyzes an alkyl-migration followed by a ketol-acid reduction of (S)-2-acetolactate (S2AL) to yield (R)-2,3-dihydroxy-isovalerate. In the isomerase reaction, S2AL is rearranged via a Mg-dependent methyl migration to produce 3-hydroxy-3-methyl-2-ketobutyrate (HMKB). In the reductase reaction, this 2-ketoacid undergoes a metal-dependent reduction by NADPH to yield (R)-2,3-dihydroxy-isovalerate.</text>
</comment>
<comment type="catalytic activity">
    <reaction evidence="1">
        <text>(2R)-2,3-dihydroxy-3-methylbutanoate + NADP(+) = (2S)-2-acetolactate + NADPH + H(+)</text>
        <dbReference type="Rhea" id="RHEA:22068"/>
        <dbReference type="ChEBI" id="CHEBI:15378"/>
        <dbReference type="ChEBI" id="CHEBI:49072"/>
        <dbReference type="ChEBI" id="CHEBI:57783"/>
        <dbReference type="ChEBI" id="CHEBI:58349"/>
        <dbReference type="ChEBI" id="CHEBI:58476"/>
        <dbReference type="EC" id="1.1.1.86"/>
    </reaction>
</comment>
<comment type="catalytic activity">
    <reaction evidence="1">
        <text>(2R,3R)-2,3-dihydroxy-3-methylpentanoate + NADP(+) = (S)-2-ethyl-2-hydroxy-3-oxobutanoate + NADPH + H(+)</text>
        <dbReference type="Rhea" id="RHEA:13493"/>
        <dbReference type="ChEBI" id="CHEBI:15378"/>
        <dbReference type="ChEBI" id="CHEBI:49256"/>
        <dbReference type="ChEBI" id="CHEBI:49258"/>
        <dbReference type="ChEBI" id="CHEBI:57783"/>
        <dbReference type="ChEBI" id="CHEBI:58349"/>
        <dbReference type="EC" id="1.1.1.86"/>
    </reaction>
</comment>
<comment type="cofactor">
    <cofactor evidence="1">
        <name>Mg(2+)</name>
        <dbReference type="ChEBI" id="CHEBI:18420"/>
    </cofactor>
    <text evidence="1">Binds 2 magnesium ions per subunit.</text>
</comment>
<comment type="pathway">
    <text evidence="1">Amino-acid biosynthesis; L-isoleucine biosynthesis; L-isoleucine from 2-oxobutanoate: step 2/4.</text>
</comment>
<comment type="pathway">
    <text evidence="1">Amino-acid biosynthesis; L-valine biosynthesis; L-valine from pyruvate: step 2/4.</text>
</comment>
<comment type="similarity">
    <text evidence="1">Belongs to the ketol-acid reductoisomerase family.</text>
</comment>
<gene>
    <name evidence="1" type="primary">ilvC</name>
    <name type="ordered locus">YPDSF_3501</name>
</gene>
<name>ILVC_YERPP</name>
<accession>A4TRD9</accession>
<feature type="chain" id="PRO_1000050594" description="Ketol-acid reductoisomerase (NADP(+))">
    <location>
        <begin position="1"/>
        <end position="492"/>
    </location>
</feature>
<feature type="domain" description="KARI N-terminal Rossmann" evidence="2">
    <location>
        <begin position="15"/>
        <end position="208"/>
    </location>
</feature>
<feature type="domain" description="KARI C-terminal knotted 1" evidence="3">
    <location>
        <begin position="209"/>
        <end position="344"/>
    </location>
</feature>
<feature type="domain" description="KARI C-terminal knotted 2" evidence="3">
    <location>
        <begin position="345"/>
        <end position="485"/>
    </location>
</feature>
<feature type="active site" evidence="1">
    <location>
        <position position="132"/>
    </location>
</feature>
<feature type="binding site" evidence="1">
    <location>
        <begin position="45"/>
        <end position="48"/>
    </location>
    <ligand>
        <name>NADP(+)</name>
        <dbReference type="ChEBI" id="CHEBI:58349"/>
    </ligand>
</feature>
<feature type="binding site" evidence="1">
    <location>
        <position position="68"/>
    </location>
    <ligand>
        <name>NADP(+)</name>
        <dbReference type="ChEBI" id="CHEBI:58349"/>
    </ligand>
</feature>
<feature type="binding site" evidence="1">
    <location>
        <position position="76"/>
    </location>
    <ligand>
        <name>NADP(+)</name>
        <dbReference type="ChEBI" id="CHEBI:58349"/>
    </ligand>
</feature>
<feature type="binding site" evidence="1">
    <location>
        <position position="78"/>
    </location>
    <ligand>
        <name>NADP(+)</name>
        <dbReference type="ChEBI" id="CHEBI:58349"/>
    </ligand>
</feature>
<feature type="binding site" evidence="1">
    <location>
        <begin position="108"/>
        <end position="110"/>
    </location>
    <ligand>
        <name>NADP(+)</name>
        <dbReference type="ChEBI" id="CHEBI:58349"/>
    </ligand>
</feature>
<feature type="binding site" evidence="1">
    <location>
        <position position="158"/>
    </location>
    <ligand>
        <name>NADP(+)</name>
        <dbReference type="ChEBI" id="CHEBI:58349"/>
    </ligand>
</feature>
<feature type="binding site" evidence="1">
    <location>
        <position position="217"/>
    </location>
    <ligand>
        <name>Mg(2+)</name>
        <dbReference type="ChEBI" id="CHEBI:18420"/>
        <label>1</label>
    </ligand>
</feature>
<feature type="binding site" evidence="1">
    <location>
        <position position="217"/>
    </location>
    <ligand>
        <name>Mg(2+)</name>
        <dbReference type="ChEBI" id="CHEBI:18420"/>
        <label>2</label>
    </ligand>
</feature>
<feature type="binding site" evidence="1">
    <location>
        <position position="221"/>
    </location>
    <ligand>
        <name>Mg(2+)</name>
        <dbReference type="ChEBI" id="CHEBI:18420"/>
        <label>1</label>
    </ligand>
</feature>
<feature type="binding site" evidence="1">
    <location>
        <position position="389"/>
    </location>
    <ligand>
        <name>Mg(2+)</name>
        <dbReference type="ChEBI" id="CHEBI:18420"/>
        <label>2</label>
    </ligand>
</feature>
<feature type="binding site" evidence="1">
    <location>
        <position position="393"/>
    </location>
    <ligand>
        <name>Mg(2+)</name>
        <dbReference type="ChEBI" id="CHEBI:18420"/>
        <label>2</label>
    </ligand>
</feature>
<feature type="binding site" evidence="1">
    <location>
        <position position="414"/>
    </location>
    <ligand>
        <name>substrate</name>
    </ligand>
</feature>
<reference key="1">
    <citation type="submission" date="2007-02" db="EMBL/GenBank/DDBJ databases">
        <title>Complete sequence of chromosome of Yersinia pestis Pestoides F.</title>
        <authorList>
            <consortium name="US DOE Joint Genome Institute"/>
            <person name="Copeland A."/>
            <person name="Lucas S."/>
            <person name="Lapidus A."/>
            <person name="Barry K."/>
            <person name="Detter J.C."/>
            <person name="Glavina del Rio T."/>
            <person name="Hammon N."/>
            <person name="Israni S."/>
            <person name="Dalin E."/>
            <person name="Tice H."/>
            <person name="Pitluck S."/>
            <person name="Di Bartolo G."/>
            <person name="Chain P."/>
            <person name="Malfatti S."/>
            <person name="Shin M."/>
            <person name="Vergez L."/>
            <person name="Schmutz J."/>
            <person name="Larimer F."/>
            <person name="Land M."/>
            <person name="Hauser L."/>
            <person name="Worsham P."/>
            <person name="Chu M."/>
            <person name="Bearden S."/>
            <person name="Garcia E."/>
            <person name="Richardson P."/>
        </authorList>
    </citation>
    <scope>NUCLEOTIDE SEQUENCE [LARGE SCALE GENOMIC DNA]</scope>
    <source>
        <strain>Pestoides F</strain>
    </source>
</reference>
<organism>
    <name type="scientific">Yersinia pestis (strain Pestoides F)</name>
    <dbReference type="NCBI Taxonomy" id="386656"/>
    <lineage>
        <taxon>Bacteria</taxon>
        <taxon>Pseudomonadati</taxon>
        <taxon>Pseudomonadota</taxon>
        <taxon>Gammaproteobacteria</taxon>
        <taxon>Enterobacterales</taxon>
        <taxon>Yersiniaceae</taxon>
        <taxon>Yersinia</taxon>
    </lineage>
</organism>
<keyword id="KW-0028">Amino-acid biosynthesis</keyword>
<keyword id="KW-0100">Branched-chain amino acid biosynthesis</keyword>
<keyword id="KW-0460">Magnesium</keyword>
<keyword id="KW-0479">Metal-binding</keyword>
<keyword id="KW-0521">NADP</keyword>
<keyword id="KW-0560">Oxidoreductase</keyword>
<keyword id="KW-0677">Repeat</keyword>
<evidence type="ECO:0000255" key="1">
    <source>
        <dbReference type="HAMAP-Rule" id="MF_00435"/>
    </source>
</evidence>
<evidence type="ECO:0000255" key="2">
    <source>
        <dbReference type="PROSITE-ProRule" id="PRU01197"/>
    </source>
</evidence>
<evidence type="ECO:0000255" key="3">
    <source>
        <dbReference type="PROSITE-ProRule" id="PRU01198"/>
    </source>
</evidence>
<proteinExistence type="inferred from homology"/>
<protein>
    <recommendedName>
        <fullName evidence="1">Ketol-acid reductoisomerase (NADP(+))</fullName>
        <shortName evidence="1">KARI</shortName>
        <ecNumber evidence="1">1.1.1.86</ecNumber>
    </recommendedName>
    <alternativeName>
        <fullName evidence="1">Acetohydroxy-acid isomeroreductase</fullName>
        <shortName evidence="1">AHIR</shortName>
    </alternativeName>
    <alternativeName>
        <fullName evidence="1">Alpha-keto-beta-hydroxylacyl reductoisomerase</fullName>
    </alternativeName>
    <alternativeName>
        <fullName evidence="1">Ketol-acid reductoisomerase type 2</fullName>
    </alternativeName>
    <alternativeName>
        <fullName evidence="1">Ketol-acid reductoisomerase type II</fullName>
    </alternativeName>
</protein>
<dbReference type="EC" id="1.1.1.86" evidence="1"/>
<dbReference type="EMBL" id="CP000668">
    <property type="protein sequence ID" value="ABP41851.1"/>
    <property type="molecule type" value="Genomic_DNA"/>
</dbReference>
<dbReference type="RefSeq" id="WP_002212007.1">
    <property type="nucleotide sequence ID" value="NZ_CP009715.1"/>
</dbReference>
<dbReference type="SMR" id="A4TRD9"/>
<dbReference type="GeneID" id="57974817"/>
<dbReference type="KEGG" id="ypp:YPDSF_3501"/>
<dbReference type="PATRIC" id="fig|386656.14.peg.819"/>
<dbReference type="UniPathway" id="UPA00047">
    <property type="reaction ID" value="UER00056"/>
</dbReference>
<dbReference type="UniPathway" id="UPA00049">
    <property type="reaction ID" value="UER00060"/>
</dbReference>
<dbReference type="GO" id="GO:0005829">
    <property type="term" value="C:cytosol"/>
    <property type="evidence" value="ECO:0007669"/>
    <property type="project" value="TreeGrafter"/>
</dbReference>
<dbReference type="GO" id="GO:0004455">
    <property type="term" value="F:ketol-acid reductoisomerase activity"/>
    <property type="evidence" value="ECO:0007669"/>
    <property type="project" value="UniProtKB-UniRule"/>
</dbReference>
<dbReference type="GO" id="GO:0000287">
    <property type="term" value="F:magnesium ion binding"/>
    <property type="evidence" value="ECO:0007669"/>
    <property type="project" value="UniProtKB-UniRule"/>
</dbReference>
<dbReference type="GO" id="GO:0009097">
    <property type="term" value="P:isoleucine biosynthetic process"/>
    <property type="evidence" value="ECO:0007669"/>
    <property type="project" value="UniProtKB-UniRule"/>
</dbReference>
<dbReference type="GO" id="GO:0009099">
    <property type="term" value="P:L-valine biosynthetic process"/>
    <property type="evidence" value="ECO:0007669"/>
    <property type="project" value="UniProtKB-UniRule"/>
</dbReference>
<dbReference type="FunFam" id="1.10.1040.10:FF:000007">
    <property type="entry name" value="Ketol-acid reductoisomerase (NADP(+))"/>
    <property type="match status" value="1"/>
</dbReference>
<dbReference type="FunFam" id="3.40.50.720:FF:000043">
    <property type="entry name" value="Ketol-acid reductoisomerase (NADP(+))"/>
    <property type="match status" value="1"/>
</dbReference>
<dbReference type="Gene3D" id="1.10.1040.10">
    <property type="entry name" value="N-(1-d-carboxylethyl)-l-norvaline Dehydrogenase, domain 2"/>
    <property type="match status" value="1"/>
</dbReference>
<dbReference type="Gene3D" id="3.40.50.720">
    <property type="entry name" value="NAD(P)-binding Rossmann-like Domain"/>
    <property type="match status" value="1"/>
</dbReference>
<dbReference type="HAMAP" id="MF_00435">
    <property type="entry name" value="IlvC"/>
    <property type="match status" value="1"/>
</dbReference>
<dbReference type="InterPro" id="IPR008927">
    <property type="entry name" value="6-PGluconate_DH-like_C_sf"/>
</dbReference>
<dbReference type="InterPro" id="IPR013328">
    <property type="entry name" value="6PGD_dom2"/>
</dbReference>
<dbReference type="InterPro" id="IPR013023">
    <property type="entry name" value="KARI"/>
</dbReference>
<dbReference type="InterPro" id="IPR000506">
    <property type="entry name" value="KARI_C"/>
</dbReference>
<dbReference type="InterPro" id="IPR013116">
    <property type="entry name" value="KARI_N"/>
</dbReference>
<dbReference type="InterPro" id="IPR036291">
    <property type="entry name" value="NAD(P)-bd_dom_sf"/>
</dbReference>
<dbReference type="NCBIfam" id="TIGR00465">
    <property type="entry name" value="ilvC"/>
    <property type="match status" value="1"/>
</dbReference>
<dbReference type="NCBIfam" id="NF003557">
    <property type="entry name" value="PRK05225.1"/>
    <property type="match status" value="1"/>
</dbReference>
<dbReference type="PANTHER" id="PTHR21371">
    <property type="entry name" value="KETOL-ACID REDUCTOISOMERASE, MITOCHONDRIAL"/>
    <property type="match status" value="1"/>
</dbReference>
<dbReference type="PANTHER" id="PTHR21371:SF1">
    <property type="entry name" value="KETOL-ACID REDUCTOISOMERASE, MITOCHONDRIAL"/>
    <property type="match status" value="1"/>
</dbReference>
<dbReference type="Pfam" id="PF01450">
    <property type="entry name" value="KARI_C"/>
    <property type="match status" value="2"/>
</dbReference>
<dbReference type="Pfam" id="PF07991">
    <property type="entry name" value="KARI_N"/>
    <property type="match status" value="1"/>
</dbReference>
<dbReference type="SUPFAM" id="SSF48179">
    <property type="entry name" value="6-phosphogluconate dehydrogenase C-terminal domain-like"/>
    <property type="match status" value="2"/>
</dbReference>
<dbReference type="SUPFAM" id="SSF51735">
    <property type="entry name" value="NAD(P)-binding Rossmann-fold domains"/>
    <property type="match status" value="1"/>
</dbReference>
<dbReference type="PROSITE" id="PS51851">
    <property type="entry name" value="KARI_C"/>
    <property type="match status" value="2"/>
</dbReference>
<dbReference type="PROSITE" id="PS51850">
    <property type="entry name" value="KARI_N"/>
    <property type="match status" value="1"/>
</dbReference>